<evidence type="ECO:0000250" key="1">
    <source>
        <dbReference type="UniProtKB" id="Q9NV88"/>
    </source>
</evidence>
<evidence type="ECO:0000256" key="2">
    <source>
        <dbReference type="SAM" id="MobiDB-lite"/>
    </source>
</evidence>
<evidence type="ECO:0000305" key="3"/>
<protein>
    <recommendedName>
        <fullName>Integrator complex subunit 9 homolog</fullName>
    </recommendedName>
</protein>
<feature type="chain" id="PRO_0000342371" description="Integrator complex subunit 9 homolog">
    <location>
        <begin position="1"/>
        <end position="712"/>
    </location>
</feature>
<feature type="region of interest" description="Disordered" evidence="2">
    <location>
        <begin position="47"/>
        <end position="73"/>
    </location>
</feature>
<feature type="compositionally biased region" description="Low complexity" evidence="2">
    <location>
        <begin position="47"/>
        <end position="70"/>
    </location>
</feature>
<sequence length="712" mass="81490">MKVHCLSQSAQSPCFLLEYKNVKILLDCALEISSILHFLPKNLNYNNNNNNNNNNNNNNNNNNNNNNNNNSYSFKEKDKELNQFFKNINGTLYIDNGCSNIKYNCPQFEMIDDFSTIDMILISNYTNIYALPFITEYTNFQGKIYATEPTVQIGKLLLEELVQMDKQYSNSSINNNNNNNNLSDCWQNIEILEKLNVHNVGMENENLYRDSYRWKDLYKKIDIEKSFEKIQSIRFNESIKHYGFECIPSSSGYGLGSANWVIESKGFERVVYISDSSLSLSRYPTPFQLSPIDNPDVLILSKINHYPNNPPDQMLSELCSNIGSTLQQGGTVLIPSYSCGIILDLFEHLADYLNKVGLPYVPIYFVSSVSKAVLSYADIYSEWLNKSKQERAFMPETPFLHQDLMRKGQFQAYQHVHSNFQANDPCIIFTGHPSCRIGDITTLIKLYDNPKNSILLIEPDFDFKSTVLPFSKQISRIQFLPIDPRINFNEANLLISKLSPKHLIIPRIYKNYVKNKHSNGNFGIVTTILPLDTIKIQNNQNFESGFIDKELAQTIQTKVLDKSSQLKNNTTTTTTTTINNQQPIHVAEISGVLSMSDHELIISPPNISDSNKIIHIKEKFIWGTLSIENIIKAINSTKQFKNNGDSIEYFEINENYYLIKISSKNKTNNNNNSDQVTNIHLSPQNVNIETSCETTRRLISDIVLLNCNGFYV</sequence>
<dbReference type="EMBL" id="AAFI02000047">
    <property type="protein sequence ID" value="EAL66096.1"/>
    <property type="molecule type" value="Genomic_DNA"/>
</dbReference>
<dbReference type="RefSeq" id="XP_640069.1">
    <property type="nucleotide sequence ID" value="XM_634977.1"/>
</dbReference>
<dbReference type="SMR" id="Q54SH0"/>
<dbReference type="FunCoup" id="Q54SH0">
    <property type="interactions" value="617"/>
</dbReference>
<dbReference type="STRING" id="44689.Q54SH0"/>
<dbReference type="PaxDb" id="44689-DDB0234099"/>
<dbReference type="EnsemblProtists" id="EAL66096">
    <property type="protein sequence ID" value="EAL66096"/>
    <property type="gene ID" value="DDB_G0282473"/>
</dbReference>
<dbReference type="GeneID" id="8623598"/>
<dbReference type="KEGG" id="ddi:DDB_G0282473"/>
<dbReference type="dictyBase" id="DDB_G0282473">
    <property type="gene designation" value="ints9"/>
</dbReference>
<dbReference type="VEuPathDB" id="AmoebaDB:DDB_G0282473"/>
<dbReference type="eggNOG" id="KOG1138">
    <property type="taxonomic scope" value="Eukaryota"/>
</dbReference>
<dbReference type="HOGENOM" id="CLU_023159_1_0_1"/>
<dbReference type="InParanoid" id="Q54SH0"/>
<dbReference type="OMA" id="AMKAVHC"/>
<dbReference type="PhylomeDB" id="Q54SH0"/>
<dbReference type="Reactome" id="R-DDI-6807505">
    <property type="pathway name" value="RNA polymerase II transcribes snRNA genes"/>
</dbReference>
<dbReference type="PRO" id="PR:Q54SH0"/>
<dbReference type="Proteomes" id="UP000002195">
    <property type="component" value="Chromosome 3"/>
</dbReference>
<dbReference type="GO" id="GO:0005737">
    <property type="term" value="C:cytoplasm"/>
    <property type="evidence" value="ECO:0000250"/>
    <property type="project" value="UniProtKB"/>
</dbReference>
<dbReference type="GO" id="GO:0160232">
    <property type="term" value="C:INTAC complex"/>
    <property type="evidence" value="ECO:0000250"/>
    <property type="project" value="UniProtKB"/>
</dbReference>
<dbReference type="GO" id="GO:0032039">
    <property type="term" value="C:integrator complex"/>
    <property type="evidence" value="ECO:0000250"/>
    <property type="project" value="UniProtKB"/>
</dbReference>
<dbReference type="GO" id="GO:0005634">
    <property type="term" value="C:nucleus"/>
    <property type="evidence" value="ECO:0000250"/>
    <property type="project" value="UniProtKB"/>
</dbReference>
<dbReference type="GO" id="GO:0160240">
    <property type="term" value="P:RNA polymerase II transcription initiation surveillance"/>
    <property type="evidence" value="ECO:0000250"/>
    <property type="project" value="UniProtKB"/>
</dbReference>
<dbReference type="GO" id="GO:0034472">
    <property type="term" value="P:snRNA 3'-end processing"/>
    <property type="evidence" value="ECO:0000318"/>
    <property type="project" value="GO_Central"/>
</dbReference>
<dbReference type="Gene3D" id="3.60.15.10">
    <property type="entry name" value="Ribonuclease Z/Hydroxyacylglutathione hydrolase-like"/>
    <property type="match status" value="1"/>
</dbReference>
<dbReference type="InterPro" id="IPR022712">
    <property type="entry name" value="Beta_Casp"/>
</dbReference>
<dbReference type="InterPro" id="IPR027074">
    <property type="entry name" value="Integrator_9su"/>
</dbReference>
<dbReference type="InterPro" id="IPR001279">
    <property type="entry name" value="Metallo-B-lactamas"/>
</dbReference>
<dbReference type="InterPro" id="IPR036866">
    <property type="entry name" value="RibonucZ/Hydroxyglut_hydro"/>
</dbReference>
<dbReference type="PANTHER" id="PTHR46094">
    <property type="entry name" value="INTEGRATOR COMPLEX SUBUNIT 9"/>
    <property type="match status" value="1"/>
</dbReference>
<dbReference type="PANTHER" id="PTHR46094:SF1">
    <property type="entry name" value="INTEGRATOR COMPLEX SUBUNIT 9"/>
    <property type="match status" value="1"/>
</dbReference>
<dbReference type="Pfam" id="PF10996">
    <property type="entry name" value="Beta-Casp"/>
    <property type="match status" value="1"/>
</dbReference>
<dbReference type="Pfam" id="PF16661">
    <property type="entry name" value="Lactamase_B_6"/>
    <property type="match status" value="1"/>
</dbReference>
<dbReference type="SMART" id="SM01027">
    <property type="entry name" value="Beta-Casp"/>
    <property type="match status" value="1"/>
</dbReference>
<dbReference type="SUPFAM" id="SSF56281">
    <property type="entry name" value="Metallo-hydrolase/oxidoreductase"/>
    <property type="match status" value="1"/>
</dbReference>
<accession>Q54SH0</accession>
<proteinExistence type="inferred from homology"/>
<gene>
    <name type="primary">ints9</name>
    <name type="ORF">DDB_G0282473</name>
</gene>
<name>INT9_DICDI</name>
<organism>
    <name type="scientific">Dictyostelium discoideum</name>
    <name type="common">Social amoeba</name>
    <dbReference type="NCBI Taxonomy" id="44689"/>
    <lineage>
        <taxon>Eukaryota</taxon>
        <taxon>Amoebozoa</taxon>
        <taxon>Evosea</taxon>
        <taxon>Eumycetozoa</taxon>
        <taxon>Dictyostelia</taxon>
        <taxon>Dictyosteliales</taxon>
        <taxon>Dictyosteliaceae</taxon>
        <taxon>Dictyostelium</taxon>
    </lineage>
</organism>
<keyword id="KW-0963">Cytoplasm</keyword>
<keyword id="KW-0539">Nucleus</keyword>
<keyword id="KW-1185">Reference proteome</keyword>
<comment type="function">
    <text evidence="1">Component of the integrator complex, a multiprotein complex that terminates RNA polymerase II (Pol II) transcription in the promoter-proximal region of genes. The integrator complex provides a quality checkpoint during transcription elongation by driving premature transcription termination of transcripts that are unfavorably configured for transcriptional elongation: the complex terminates transcription by (1) catalyzing dephosphorylation of the C-terminal domain (CTD) of Pol II subunit polr2a, (2) degrading the exiting nascent RNA transcript via endonuclease activity and (3) promoting the release of Pol II from bound DNA. The integrator complex is also involved in terminating the synthesis of non-coding Pol II transcripts, such as enhancer RNAs (eRNAs), small nuclear RNAs (snRNAs), telomerase RNAs and long non-coding RNAs (lncRNAs).</text>
</comment>
<comment type="subunit">
    <text evidence="1">Component of the Integrator complex. The core complex associates with protein phosphatase 2A subunits, to form the Integrator-PP2A (INTAC) complex.</text>
</comment>
<comment type="subcellular location">
    <subcellularLocation>
        <location evidence="1">Nucleus</location>
    </subcellularLocation>
    <subcellularLocation>
        <location evidence="1">Cytoplasm</location>
    </subcellularLocation>
</comment>
<comment type="similarity">
    <text evidence="3">Belongs to the metallo-beta-lactamase superfamily. RNA-metabolizing metallo-beta-lactamase-like family. INTS9 subfamily.</text>
</comment>
<reference key="1">
    <citation type="journal article" date="2005" name="Nature">
        <title>The genome of the social amoeba Dictyostelium discoideum.</title>
        <authorList>
            <person name="Eichinger L."/>
            <person name="Pachebat J.A."/>
            <person name="Gloeckner G."/>
            <person name="Rajandream M.A."/>
            <person name="Sucgang R."/>
            <person name="Berriman M."/>
            <person name="Song J."/>
            <person name="Olsen R."/>
            <person name="Szafranski K."/>
            <person name="Xu Q."/>
            <person name="Tunggal B."/>
            <person name="Kummerfeld S."/>
            <person name="Madera M."/>
            <person name="Konfortov B.A."/>
            <person name="Rivero F."/>
            <person name="Bankier A.T."/>
            <person name="Lehmann R."/>
            <person name="Hamlin N."/>
            <person name="Davies R."/>
            <person name="Gaudet P."/>
            <person name="Fey P."/>
            <person name="Pilcher K."/>
            <person name="Chen G."/>
            <person name="Saunders D."/>
            <person name="Sodergren E.J."/>
            <person name="Davis P."/>
            <person name="Kerhornou A."/>
            <person name="Nie X."/>
            <person name="Hall N."/>
            <person name="Anjard C."/>
            <person name="Hemphill L."/>
            <person name="Bason N."/>
            <person name="Farbrother P."/>
            <person name="Desany B."/>
            <person name="Just E."/>
            <person name="Morio T."/>
            <person name="Rost R."/>
            <person name="Churcher C.M."/>
            <person name="Cooper J."/>
            <person name="Haydock S."/>
            <person name="van Driessche N."/>
            <person name="Cronin A."/>
            <person name="Goodhead I."/>
            <person name="Muzny D.M."/>
            <person name="Mourier T."/>
            <person name="Pain A."/>
            <person name="Lu M."/>
            <person name="Harper D."/>
            <person name="Lindsay R."/>
            <person name="Hauser H."/>
            <person name="James K.D."/>
            <person name="Quiles M."/>
            <person name="Madan Babu M."/>
            <person name="Saito T."/>
            <person name="Buchrieser C."/>
            <person name="Wardroper A."/>
            <person name="Felder M."/>
            <person name="Thangavelu M."/>
            <person name="Johnson D."/>
            <person name="Knights A."/>
            <person name="Loulseged H."/>
            <person name="Mungall K.L."/>
            <person name="Oliver K."/>
            <person name="Price C."/>
            <person name="Quail M.A."/>
            <person name="Urushihara H."/>
            <person name="Hernandez J."/>
            <person name="Rabbinowitsch E."/>
            <person name="Steffen D."/>
            <person name="Sanders M."/>
            <person name="Ma J."/>
            <person name="Kohara Y."/>
            <person name="Sharp S."/>
            <person name="Simmonds M.N."/>
            <person name="Spiegler S."/>
            <person name="Tivey A."/>
            <person name="Sugano S."/>
            <person name="White B."/>
            <person name="Walker D."/>
            <person name="Woodward J.R."/>
            <person name="Winckler T."/>
            <person name="Tanaka Y."/>
            <person name="Shaulsky G."/>
            <person name="Schleicher M."/>
            <person name="Weinstock G.M."/>
            <person name="Rosenthal A."/>
            <person name="Cox E.C."/>
            <person name="Chisholm R.L."/>
            <person name="Gibbs R.A."/>
            <person name="Loomis W.F."/>
            <person name="Platzer M."/>
            <person name="Kay R.R."/>
            <person name="Williams J.G."/>
            <person name="Dear P.H."/>
            <person name="Noegel A.A."/>
            <person name="Barrell B.G."/>
            <person name="Kuspa A."/>
        </authorList>
    </citation>
    <scope>NUCLEOTIDE SEQUENCE [LARGE SCALE GENOMIC DNA]</scope>
    <source>
        <strain>AX4</strain>
    </source>
</reference>